<sequence length="142" mass="15971">MKTFSAKAHEVTREWYVIDATDKVLGRVASEVARRLRGKHKPEFTPHVDTGDFIIVINASKLKVTGNKTLDKKYYRHSGYPGGIYETTFGKMQERFPGRALEKAVKGMLPKGPLGYAMIKKLKVYAEATHPHSAQQPKALEI</sequence>
<feature type="chain" id="PRO_0000261701" description="Large ribosomal subunit protein uL13">
    <location>
        <begin position="1"/>
        <end position="142"/>
    </location>
</feature>
<accession>Q63QW3</accession>
<organism>
    <name type="scientific">Burkholderia pseudomallei (strain K96243)</name>
    <dbReference type="NCBI Taxonomy" id="272560"/>
    <lineage>
        <taxon>Bacteria</taxon>
        <taxon>Pseudomonadati</taxon>
        <taxon>Pseudomonadota</taxon>
        <taxon>Betaproteobacteria</taxon>
        <taxon>Burkholderiales</taxon>
        <taxon>Burkholderiaceae</taxon>
        <taxon>Burkholderia</taxon>
        <taxon>pseudomallei group</taxon>
    </lineage>
</organism>
<proteinExistence type="inferred from homology"/>
<keyword id="KW-1185">Reference proteome</keyword>
<keyword id="KW-0687">Ribonucleoprotein</keyword>
<keyword id="KW-0689">Ribosomal protein</keyword>
<gene>
    <name evidence="1" type="primary">rplM</name>
    <name type="ordered locus">BPSL2911</name>
</gene>
<protein>
    <recommendedName>
        <fullName evidence="1">Large ribosomal subunit protein uL13</fullName>
    </recommendedName>
    <alternativeName>
        <fullName evidence="2">50S ribosomal protein L13</fullName>
    </alternativeName>
</protein>
<name>RL13_BURPS</name>
<dbReference type="EMBL" id="BX571965">
    <property type="protein sequence ID" value="CAH36921.1"/>
    <property type="molecule type" value="Genomic_DNA"/>
</dbReference>
<dbReference type="RefSeq" id="WP_004522094.1">
    <property type="nucleotide sequence ID" value="NZ_CP009538.1"/>
</dbReference>
<dbReference type="RefSeq" id="YP_109505.1">
    <property type="nucleotide sequence ID" value="NC_006350.1"/>
</dbReference>
<dbReference type="SMR" id="Q63QW3"/>
<dbReference type="STRING" id="272560.BPSL2911"/>
<dbReference type="GeneID" id="93126851"/>
<dbReference type="KEGG" id="bps:BPSL2911"/>
<dbReference type="PATRIC" id="fig|272560.51.peg.2378"/>
<dbReference type="eggNOG" id="COG0102">
    <property type="taxonomic scope" value="Bacteria"/>
</dbReference>
<dbReference type="PRO" id="PR:Q63QW3"/>
<dbReference type="Proteomes" id="UP000000605">
    <property type="component" value="Chromosome 1"/>
</dbReference>
<dbReference type="GO" id="GO:0022625">
    <property type="term" value="C:cytosolic large ribosomal subunit"/>
    <property type="evidence" value="ECO:0007669"/>
    <property type="project" value="TreeGrafter"/>
</dbReference>
<dbReference type="GO" id="GO:0003729">
    <property type="term" value="F:mRNA binding"/>
    <property type="evidence" value="ECO:0007669"/>
    <property type="project" value="TreeGrafter"/>
</dbReference>
<dbReference type="GO" id="GO:0003735">
    <property type="term" value="F:structural constituent of ribosome"/>
    <property type="evidence" value="ECO:0007669"/>
    <property type="project" value="InterPro"/>
</dbReference>
<dbReference type="GO" id="GO:0017148">
    <property type="term" value="P:negative regulation of translation"/>
    <property type="evidence" value="ECO:0007669"/>
    <property type="project" value="TreeGrafter"/>
</dbReference>
<dbReference type="GO" id="GO:0006412">
    <property type="term" value="P:translation"/>
    <property type="evidence" value="ECO:0007669"/>
    <property type="project" value="UniProtKB-UniRule"/>
</dbReference>
<dbReference type="CDD" id="cd00392">
    <property type="entry name" value="Ribosomal_L13"/>
    <property type="match status" value="1"/>
</dbReference>
<dbReference type="FunFam" id="3.90.1180.10:FF:000001">
    <property type="entry name" value="50S ribosomal protein L13"/>
    <property type="match status" value="1"/>
</dbReference>
<dbReference type="Gene3D" id="3.90.1180.10">
    <property type="entry name" value="Ribosomal protein L13"/>
    <property type="match status" value="1"/>
</dbReference>
<dbReference type="HAMAP" id="MF_01366">
    <property type="entry name" value="Ribosomal_uL13"/>
    <property type="match status" value="1"/>
</dbReference>
<dbReference type="InterPro" id="IPR005822">
    <property type="entry name" value="Ribosomal_uL13"/>
</dbReference>
<dbReference type="InterPro" id="IPR005823">
    <property type="entry name" value="Ribosomal_uL13_bac-type"/>
</dbReference>
<dbReference type="InterPro" id="IPR036899">
    <property type="entry name" value="Ribosomal_uL13_sf"/>
</dbReference>
<dbReference type="NCBIfam" id="TIGR01066">
    <property type="entry name" value="rplM_bact"/>
    <property type="match status" value="1"/>
</dbReference>
<dbReference type="PANTHER" id="PTHR11545:SF2">
    <property type="entry name" value="LARGE RIBOSOMAL SUBUNIT PROTEIN UL13M"/>
    <property type="match status" value="1"/>
</dbReference>
<dbReference type="PANTHER" id="PTHR11545">
    <property type="entry name" value="RIBOSOMAL PROTEIN L13"/>
    <property type="match status" value="1"/>
</dbReference>
<dbReference type="Pfam" id="PF00572">
    <property type="entry name" value="Ribosomal_L13"/>
    <property type="match status" value="1"/>
</dbReference>
<dbReference type="PIRSF" id="PIRSF002181">
    <property type="entry name" value="Ribosomal_L13"/>
    <property type="match status" value="1"/>
</dbReference>
<dbReference type="SUPFAM" id="SSF52161">
    <property type="entry name" value="Ribosomal protein L13"/>
    <property type="match status" value="1"/>
</dbReference>
<evidence type="ECO:0000255" key="1">
    <source>
        <dbReference type="HAMAP-Rule" id="MF_01366"/>
    </source>
</evidence>
<evidence type="ECO:0000305" key="2"/>
<reference key="1">
    <citation type="journal article" date="2004" name="Proc. Natl. Acad. Sci. U.S.A.">
        <title>Genomic plasticity of the causative agent of melioidosis, Burkholderia pseudomallei.</title>
        <authorList>
            <person name="Holden M.T.G."/>
            <person name="Titball R.W."/>
            <person name="Peacock S.J."/>
            <person name="Cerdeno-Tarraga A.-M."/>
            <person name="Atkins T."/>
            <person name="Crossman L.C."/>
            <person name="Pitt T."/>
            <person name="Churcher C."/>
            <person name="Mungall K.L."/>
            <person name="Bentley S.D."/>
            <person name="Sebaihia M."/>
            <person name="Thomson N.R."/>
            <person name="Bason N."/>
            <person name="Beacham I.R."/>
            <person name="Brooks K."/>
            <person name="Brown K.A."/>
            <person name="Brown N.F."/>
            <person name="Challis G.L."/>
            <person name="Cherevach I."/>
            <person name="Chillingworth T."/>
            <person name="Cronin A."/>
            <person name="Crossett B."/>
            <person name="Davis P."/>
            <person name="DeShazer D."/>
            <person name="Feltwell T."/>
            <person name="Fraser A."/>
            <person name="Hance Z."/>
            <person name="Hauser H."/>
            <person name="Holroyd S."/>
            <person name="Jagels K."/>
            <person name="Keith K.E."/>
            <person name="Maddison M."/>
            <person name="Moule S."/>
            <person name="Price C."/>
            <person name="Quail M.A."/>
            <person name="Rabbinowitsch E."/>
            <person name="Rutherford K."/>
            <person name="Sanders M."/>
            <person name="Simmonds M."/>
            <person name="Songsivilai S."/>
            <person name="Stevens K."/>
            <person name="Tumapa S."/>
            <person name="Vesaratchavest M."/>
            <person name="Whitehead S."/>
            <person name="Yeats C."/>
            <person name="Barrell B.G."/>
            <person name="Oyston P.C.F."/>
            <person name="Parkhill J."/>
        </authorList>
    </citation>
    <scope>NUCLEOTIDE SEQUENCE [LARGE SCALE GENOMIC DNA]</scope>
    <source>
        <strain>K96243</strain>
    </source>
</reference>
<comment type="function">
    <text evidence="1">This protein is one of the early assembly proteins of the 50S ribosomal subunit, although it is not seen to bind rRNA by itself. It is important during the early stages of 50S assembly.</text>
</comment>
<comment type="subunit">
    <text evidence="1">Part of the 50S ribosomal subunit.</text>
</comment>
<comment type="similarity">
    <text evidence="1">Belongs to the universal ribosomal protein uL13 family.</text>
</comment>